<name>MSBA_PSEPF</name>
<proteinExistence type="inferred from homology"/>
<comment type="function">
    <text evidence="1">Involved in lipopolysaccharide (LPS) biosynthesis. Translocates lipid A-core from the inner to the outer leaflet of the inner membrane. Transmembrane domains (TMD) form a pore in the inner membrane and the ATP-binding domain (NBD) is responsible for energy generation.</text>
</comment>
<comment type="catalytic activity">
    <reaction evidence="1">
        <text>ATP + H2O + lipid A-core oligosaccharideSide 1 = ADP + phosphate + lipid A-core oligosaccharideSide 2.</text>
        <dbReference type="EC" id="7.5.2.6"/>
    </reaction>
</comment>
<comment type="subunit">
    <text evidence="1">Homodimer.</text>
</comment>
<comment type="subcellular location">
    <subcellularLocation>
        <location evidence="1">Cell inner membrane</location>
        <topology evidence="1">Multi-pass membrane protein</topology>
    </subcellularLocation>
</comment>
<comment type="domain">
    <text evidence="1">In MsbA the ATP-binding domain (NBD) and the transmembrane domain (TMD) are fused.</text>
</comment>
<comment type="similarity">
    <text evidence="1">Belongs to the ABC transporter superfamily. Lipid exporter (TC 3.A.1.106) family.</text>
</comment>
<gene>
    <name evidence="1" type="primary">msbA</name>
    <name type="ordered locus">Pfl01_0481</name>
</gene>
<organism>
    <name type="scientific">Pseudomonas fluorescens (strain Pf0-1)</name>
    <dbReference type="NCBI Taxonomy" id="205922"/>
    <lineage>
        <taxon>Bacteria</taxon>
        <taxon>Pseudomonadati</taxon>
        <taxon>Pseudomonadota</taxon>
        <taxon>Gammaproteobacteria</taxon>
        <taxon>Pseudomonadales</taxon>
        <taxon>Pseudomonadaceae</taxon>
        <taxon>Pseudomonas</taxon>
    </lineage>
</organism>
<protein>
    <recommendedName>
        <fullName evidence="1">ATP-dependent lipid A-core flippase</fullName>
        <ecNumber evidence="1">7.5.2.6</ecNumber>
    </recommendedName>
    <alternativeName>
        <fullName evidence="1">Lipid A export ATP-binding/permease protein MsbA</fullName>
    </alternativeName>
</protein>
<reference key="1">
    <citation type="journal article" date="2009" name="Genome Biol.">
        <title>Genomic and genetic analyses of diversity and plant interactions of Pseudomonas fluorescens.</title>
        <authorList>
            <person name="Silby M.W."/>
            <person name="Cerdeno-Tarraga A.M."/>
            <person name="Vernikos G.S."/>
            <person name="Giddens S.R."/>
            <person name="Jackson R.W."/>
            <person name="Preston G.M."/>
            <person name="Zhang X.-X."/>
            <person name="Moon C.D."/>
            <person name="Gehrig S.M."/>
            <person name="Godfrey S.A.C."/>
            <person name="Knight C.G."/>
            <person name="Malone J.G."/>
            <person name="Robinson Z."/>
            <person name="Spiers A.J."/>
            <person name="Harris S."/>
            <person name="Challis G.L."/>
            <person name="Yaxley A.M."/>
            <person name="Harris D."/>
            <person name="Seeger K."/>
            <person name="Murphy L."/>
            <person name="Rutter S."/>
            <person name="Squares R."/>
            <person name="Quail M.A."/>
            <person name="Saunders E."/>
            <person name="Mavromatis K."/>
            <person name="Brettin T.S."/>
            <person name="Bentley S.D."/>
            <person name="Hothersall J."/>
            <person name="Stephens E."/>
            <person name="Thomas C.M."/>
            <person name="Parkhill J."/>
            <person name="Levy S.B."/>
            <person name="Rainey P.B."/>
            <person name="Thomson N.R."/>
        </authorList>
    </citation>
    <scope>NUCLEOTIDE SEQUENCE [LARGE SCALE GENOMIC DNA]</scope>
    <source>
        <strain>Pf0-1</strain>
    </source>
</reference>
<dbReference type="EC" id="7.5.2.6" evidence="1"/>
<dbReference type="EMBL" id="CP000094">
    <property type="protein sequence ID" value="ABA72225.1"/>
    <property type="molecule type" value="Genomic_DNA"/>
</dbReference>
<dbReference type="RefSeq" id="WP_011332146.1">
    <property type="nucleotide sequence ID" value="NC_007492.2"/>
</dbReference>
<dbReference type="SMR" id="Q3KJ31"/>
<dbReference type="KEGG" id="pfo:Pfl01_0481"/>
<dbReference type="eggNOG" id="COG1132">
    <property type="taxonomic scope" value="Bacteria"/>
</dbReference>
<dbReference type="HOGENOM" id="CLU_000604_84_3_6"/>
<dbReference type="Proteomes" id="UP000002704">
    <property type="component" value="Chromosome"/>
</dbReference>
<dbReference type="GO" id="GO:0005886">
    <property type="term" value="C:plasma membrane"/>
    <property type="evidence" value="ECO:0007669"/>
    <property type="project" value="UniProtKB-SubCell"/>
</dbReference>
<dbReference type="GO" id="GO:0015421">
    <property type="term" value="F:ABC-type oligopeptide transporter activity"/>
    <property type="evidence" value="ECO:0007669"/>
    <property type="project" value="TreeGrafter"/>
</dbReference>
<dbReference type="GO" id="GO:0005524">
    <property type="term" value="F:ATP binding"/>
    <property type="evidence" value="ECO:0007669"/>
    <property type="project" value="UniProtKB-KW"/>
</dbReference>
<dbReference type="GO" id="GO:0016887">
    <property type="term" value="F:ATP hydrolysis activity"/>
    <property type="evidence" value="ECO:0007669"/>
    <property type="project" value="InterPro"/>
</dbReference>
<dbReference type="GO" id="GO:0034040">
    <property type="term" value="F:ATPase-coupled lipid transmembrane transporter activity"/>
    <property type="evidence" value="ECO:0007669"/>
    <property type="project" value="InterPro"/>
</dbReference>
<dbReference type="CDD" id="cd18552">
    <property type="entry name" value="ABC_6TM_MsbA_like"/>
    <property type="match status" value="1"/>
</dbReference>
<dbReference type="FunFam" id="3.40.50.300:FF:000140">
    <property type="entry name" value="Lipid A export ATP-binding/permease protein MsbA"/>
    <property type="match status" value="1"/>
</dbReference>
<dbReference type="Gene3D" id="1.20.1560.10">
    <property type="entry name" value="ABC transporter type 1, transmembrane domain"/>
    <property type="match status" value="1"/>
</dbReference>
<dbReference type="Gene3D" id="3.40.50.300">
    <property type="entry name" value="P-loop containing nucleotide triphosphate hydrolases"/>
    <property type="match status" value="1"/>
</dbReference>
<dbReference type="InterPro" id="IPR003593">
    <property type="entry name" value="AAA+_ATPase"/>
</dbReference>
<dbReference type="InterPro" id="IPR011527">
    <property type="entry name" value="ABC1_TM_dom"/>
</dbReference>
<dbReference type="InterPro" id="IPR036640">
    <property type="entry name" value="ABC1_TM_sf"/>
</dbReference>
<dbReference type="InterPro" id="IPR003439">
    <property type="entry name" value="ABC_transporter-like_ATP-bd"/>
</dbReference>
<dbReference type="InterPro" id="IPR017871">
    <property type="entry name" value="ABC_transporter-like_CS"/>
</dbReference>
<dbReference type="InterPro" id="IPR011917">
    <property type="entry name" value="ABC_transpr_lipidA"/>
</dbReference>
<dbReference type="InterPro" id="IPR027417">
    <property type="entry name" value="P-loop_NTPase"/>
</dbReference>
<dbReference type="InterPro" id="IPR039421">
    <property type="entry name" value="Type_1_exporter"/>
</dbReference>
<dbReference type="NCBIfam" id="TIGR02203">
    <property type="entry name" value="MsbA_lipidA"/>
    <property type="match status" value="1"/>
</dbReference>
<dbReference type="PANTHER" id="PTHR43394:SF1">
    <property type="entry name" value="ATP-BINDING CASSETTE SUB-FAMILY B MEMBER 10, MITOCHONDRIAL"/>
    <property type="match status" value="1"/>
</dbReference>
<dbReference type="PANTHER" id="PTHR43394">
    <property type="entry name" value="ATP-DEPENDENT PERMEASE MDL1, MITOCHONDRIAL"/>
    <property type="match status" value="1"/>
</dbReference>
<dbReference type="Pfam" id="PF00664">
    <property type="entry name" value="ABC_membrane"/>
    <property type="match status" value="1"/>
</dbReference>
<dbReference type="Pfam" id="PF00005">
    <property type="entry name" value="ABC_tran"/>
    <property type="match status" value="1"/>
</dbReference>
<dbReference type="SMART" id="SM00382">
    <property type="entry name" value="AAA"/>
    <property type="match status" value="1"/>
</dbReference>
<dbReference type="SUPFAM" id="SSF90123">
    <property type="entry name" value="ABC transporter transmembrane region"/>
    <property type="match status" value="1"/>
</dbReference>
<dbReference type="SUPFAM" id="SSF52540">
    <property type="entry name" value="P-loop containing nucleoside triphosphate hydrolases"/>
    <property type="match status" value="1"/>
</dbReference>
<dbReference type="PROSITE" id="PS50929">
    <property type="entry name" value="ABC_TM1F"/>
    <property type="match status" value="1"/>
</dbReference>
<dbReference type="PROSITE" id="PS00211">
    <property type="entry name" value="ABC_TRANSPORTER_1"/>
    <property type="match status" value="1"/>
</dbReference>
<dbReference type="PROSITE" id="PS50893">
    <property type="entry name" value="ABC_TRANSPORTER_2"/>
    <property type="match status" value="1"/>
</dbReference>
<dbReference type="PROSITE" id="PS51239">
    <property type="entry name" value="MSBA"/>
    <property type="match status" value="1"/>
</dbReference>
<feature type="chain" id="PRO_0000271641" description="ATP-dependent lipid A-core flippase">
    <location>
        <begin position="1"/>
        <end position="600"/>
    </location>
</feature>
<feature type="transmembrane region" description="Helical" evidence="1">
    <location>
        <begin position="27"/>
        <end position="47"/>
    </location>
</feature>
<feature type="transmembrane region" description="Helical" evidence="1">
    <location>
        <begin position="83"/>
        <end position="103"/>
    </location>
</feature>
<feature type="transmembrane region" description="Helical" evidence="1">
    <location>
        <begin position="174"/>
        <end position="194"/>
    </location>
</feature>
<feature type="transmembrane region" description="Helical" evidence="1">
    <location>
        <begin position="267"/>
        <end position="287"/>
    </location>
</feature>
<feature type="domain" description="ABC transmembrane type-1" evidence="1">
    <location>
        <begin position="31"/>
        <end position="322"/>
    </location>
</feature>
<feature type="domain" description="ABC transporter" evidence="1">
    <location>
        <begin position="354"/>
        <end position="590"/>
    </location>
</feature>
<feature type="binding site" evidence="1">
    <location>
        <begin position="388"/>
        <end position="395"/>
    </location>
    <ligand>
        <name>ATP</name>
        <dbReference type="ChEBI" id="CHEBI:30616"/>
    </ligand>
</feature>
<accession>Q3KJ31</accession>
<evidence type="ECO:0000255" key="1">
    <source>
        <dbReference type="HAMAP-Rule" id="MF_01703"/>
    </source>
</evidence>
<keyword id="KW-0067">ATP-binding</keyword>
<keyword id="KW-0997">Cell inner membrane</keyword>
<keyword id="KW-1003">Cell membrane</keyword>
<keyword id="KW-0445">Lipid transport</keyword>
<keyword id="KW-0472">Membrane</keyword>
<keyword id="KW-0547">Nucleotide-binding</keyword>
<keyword id="KW-1278">Translocase</keyword>
<keyword id="KW-0812">Transmembrane</keyword>
<keyword id="KW-1133">Transmembrane helix</keyword>
<keyword id="KW-0813">Transport</keyword>
<sequence length="600" mass="66099">MTDSSPAASPSSLKIYFRLLGYVRPYISLFLISIVGFLIFASTQPMLGYILKYFVDGLSNPEAVLFPTVPYLRDLQLLQAVPLLIILIAAWQGLGSYLGNYFLAKVSLGLVHDLRVQLFNNLLVLPNRYFDKHNSGHLISRITFNVTMVTGAATDAIKVVIREGMTVIFLFASLLFMNWKLTLVMVAILPLIAVMVRTASKKFRKQSKKIQLAMGDVTHVASETIQGYRVVRSFGGEAYEEKRFLDASQGNTDKQLRMTRTGAIYTPLLQLVIYSAMAILMFLVLYLRGDASAGDMVAYITLAGLLPKPIRQLSEVSSTIQKGVAGAESIFEQLDVEPEVDTGTVERDSVSGRLDVRNLSFTYPGTERQVLDDISFSVEPGQMVALVGRSGSGKSTLANLIPRFYHHDKGEILIDGVEVEQYKLLNLRRHIAQVTQHVTLFSDTVANNIAYGDLAGAPREDIEKAARDAYAMDFIAQLPEGLDTQVGENGVLLSGGQRQRLAIARALLKNAPLLILDEATSALDTESERHIQAALDQVMKGRTTLVIAHRLSTIEKADLILVMDQGRIVERGTHDDLLAQNGYYARLNAMGLDAPAEDIA</sequence>